<dbReference type="EC" id="2.8.1.7" evidence="1"/>
<dbReference type="EMBL" id="CP000847">
    <property type="protein sequence ID" value="ABV75065.1"/>
    <property type="molecule type" value="Genomic_DNA"/>
</dbReference>
<dbReference type="RefSeq" id="WP_012149696.1">
    <property type="nucleotide sequence ID" value="NC_009881.1"/>
</dbReference>
<dbReference type="SMR" id="A8GNU0"/>
<dbReference type="STRING" id="293614.A1C_03960"/>
<dbReference type="KEGG" id="rak:A1C_03960"/>
<dbReference type="eggNOG" id="COG1104">
    <property type="taxonomic scope" value="Bacteria"/>
</dbReference>
<dbReference type="HOGENOM" id="CLU_003433_0_2_5"/>
<dbReference type="UniPathway" id="UPA00266"/>
<dbReference type="Proteomes" id="UP000006830">
    <property type="component" value="Chromosome"/>
</dbReference>
<dbReference type="GO" id="GO:1990221">
    <property type="term" value="C:L-cysteine desulfurase complex"/>
    <property type="evidence" value="ECO:0007669"/>
    <property type="project" value="UniProtKB-ARBA"/>
</dbReference>
<dbReference type="GO" id="GO:0051537">
    <property type="term" value="F:2 iron, 2 sulfur cluster binding"/>
    <property type="evidence" value="ECO:0007669"/>
    <property type="project" value="UniProtKB-UniRule"/>
</dbReference>
<dbReference type="GO" id="GO:0031071">
    <property type="term" value="F:cysteine desulfurase activity"/>
    <property type="evidence" value="ECO:0007669"/>
    <property type="project" value="UniProtKB-UniRule"/>
</dbReference>
<dbReference type="GO" id="GO:0046872">
    <property type="term" value="F:metal ion binding"/>
    <property type="evidence" value="ECO:0007669"/>
    <property type="project" value="UniProtKB-KW"/>
</dbReference>
<dbReference type="GO" id="GO:0030170">
    <property type="term" value="F:pyridoxal phosphate binding"/>
    <property type="evidence" value="ECO:0007669"/>
    <property type="project" value="UniProtKB-UniRule"/>
</dbReference>
<dbReference type="GO" id="GO:0044571">
    <property type="term" value="P:[2Fe-2S] cluster assembly"/>
    <property type="evidence" value="ECO:0007669"/>
    <property type="project" value="UniProtKB-UniRule"/>
</dbReference>
<dbReference type="FunFam" id="3.40.640.10:FF:000003">
    <property type="entry name" value="Cysteine desulfurase IscS"/>
    <property type="match status" value="1"/>
</dbReference>
<dbReference type="FunFam" id="3.90.1150.10:FF:000002">
    <property type="entry name" value="Cysteine desulfurase IscS"/>
    <property type="match status" value="1"/>
</dbReference>
<dbReference type="Gene3D" id="3.90.1150.10">
    <property type="entry name" value="Aspartate Aminotransferase, domain 1"/>
    <property type="match status" value="1"/>
</dbReference>
<dbReference type="Gene3D" id="3.40.640.10">
    <property type="entry name" value="Type I PLP-dependent aspartate aminotransferase-like (Major domain)"/>
    <property type="match status" value="1"/>
</dbReference>
<dbReference type="HAMAP" id="MF_00331">
    <property type="entry name" value="Cys_desulf_IscS"/>
    <property type="match status" value="1"/>
</dbReference>
<dbReference type="InterPro" id="IPR000192">
    <property type="entry name" value="Aminotrans_V_dom"/>
</dbReference>
<dbReference type="InterPro" id="IPR020578">
    <property type="entry name" value="Aminotrans_V_PyrdxlP_BS"/>
</dbReference>
<dbReference type="InterPro" id="IPR010240">
    <property type="entry name" value="Cys_deSase_IscS"/>
</dbReference>
<dbReference type="InterPro" id="IPR016454">
    <property type="entry name" value="Cysteine_dSase"/>
</dbReference>
<dbReference type="InterPro" id="IPR015424">
    <property type="entry name" value="PyrdxlP-dep_Trfase"/>
</dbReference>
<dbReference type="InterPro" id="IPR015421">
    <property type="entry name" value="PyrdxlP-dep_Trfase_major"/>
</dbReference>
<dbReference type="InterPro" id="IPR015422">
    <property type="entry name" value="PyrdxlP-dep_Trfase_small"/>
</dbReference>
<dbReference type="NCBIfam" id="TIGR02006">
    <property type="entry name" value="IscS"/>
    <property type="match status" value="1"/>
</dbReference>
<dbReference type="NCBIfam" id="NF002806">
    <property type="entry name" value="PRK02948.1"/>
    <property type="match status" value="1"/>
</dbReference>
<dbReference type="NCBIfam" id="NF010611">
    <property type="entry name" value="PRK14012.1"/>
    <property type="match status" value="1"/>
</dbReference>
<dbReference type="PANTHER" id="PTHR11601:SF34">
    <property type="entry name" value="CYSTEINE DESULFURASE"/>
    <property type="match status" value="1"/>
</dbReference>
<dbReference type="PANTHER" id="PTHR11601">
    <property type="entry name" value="CYSTEINE DESULFURYLASE FAMILY MEMBER"/>
    <property type="match status" value="1"/>
</dbReference>
<dbReference type="Pfam" id="PF00266">
    <property type="entry name" value="Aminotran_5"/>
    <property type="match status" value="1"/>
</dbReference>
<dbReference type="PIRSF" id="PIRSF005572">
    <property type="entry name" value="NifS"/>
    <property type="match status" value="1"/>
</dbReference>
<dbReference type="SUPFAM" id="SSF53383">
    <property type="entry name" value="PLP-dependent transferases"/>
    <property type="match status" value="1"/>
</dbReference>
<dbReference type="PROSITE" id="PS00595">
    <property type="entry name" value="AA_TRANSFER_CLASS_5"/>
    <property type="match status" value="1"/>
</dbReference>
<evidence type="ECO:0000255" key="1">
    <source>
        <dbReference type="HAMAP-Rule" id="MF_00331"/>
    </source>
</evidence>
<reference key="1">
    <citation type="submission" date="2007-09" db="EMBL/GenBank/DDBJ databases">
        <title>Complete genome sequence of Rickettsia akari.</title>
        <authorList>
            <person name="Madan A."/>
            <person name="Fahey J."/>
            <person name="Helton E."/>
            <person name="Ketteman M."/>
            <person name="Madan A."/>
            <person name="Rodrigues S."/>
            <person name="Sanchez A."/>
            <person name="Whiting M."/>
            <person name="Dasch G."/>
            <person name="Eremeeva M."/>
        </authorList>
    </citation>
    <scope>NUCLEOTIDE SEQUENCE [LARGE SCALE GENOMIC DNA]</scope>
    <source>
        <strain>Hartford</strain>
    </source>
</reference>
<feature type="chain" id="PRO_1000019433" description="Cysteine desulfurase IscS">
    <location>
        <begin position="1"/>
        <end position="410"/>
    </location>
</feature>
<feature type="active site" description="Cysteine persulfide intermediate" evidence="1">
    <location>
        <position position="334"/>
    </location>
</feature>
<feature type="binding site" evidence="1">
    <location>
        <begin position="80"/>
        <end position="81"/>
    </location>
    <ligand>
        <name>pyridoxal 5'-phosphate</name>
        <dbReference type="ChEBI" id="CHEBI:597326"/>
    </ligand>
</feature>
<feature type="binding site" evidence="1">
    <location>
        <position position="160"/>
    </location>
    <ligand>
        <name>pyridoxal 5'-phosphate</name>
        <dbReference type="ChEBI" id="CHEBI:597326"/>
    </ligand>
</feature>
<feature type="binding site" evidence="1">
    <location>
        <position position="188"/>
    </location>
    <ligand>
        <name>pyridoxal 5'-phosphate</name>
        <dbReference type="ChEBI" id="CHEBI:597326"/>
    </ligand>
</feature>
<feature type="binding site" evidence="1">
    <location>
        <begin position="208"/>
        <end position="210"/>
    </location>
    <ligand>
        <name>pyridoxal 5'-phosphate</name>
        <dbReference type="ChEBI" id="CHEBI:597326"/>
    </ligand>
</feature>
<feature type="binding site" evidence="1">
    <location>
        <position position="248"/>
    </location>
    <ligand>
        <name>pyridoxal 5'-phosphate</name>
        <dbReference type="ChEBI" id="CHEBI:597326"/>
    </ligand>
</feature>
<feature type="binding site" description="via persulfide group" evidence="1">
    <location>
        <position position="334"/>
    </location>
    <ligand>
        <name>[2Fe-2S] cluster</name>
        <dbReference type="ChEBI" id="CHEBI:190135"/>
        <note>ligand shared with IscU</note>
    </ligand>
</feature>
<feature type="modified residue" description="N6-(pyridoxal phosphate)lysine" evidence="1">
    <location>
        <position position="211"/>
    </location>
</feature>
<sequence>MNQQLNNLTLPIYMDYQATTPLDPRVMEAMLPYFTTKFGNPHSRSHSFGWEAERAVEEARSRVARLIGADTKEIIFTSGATESNNLAIKGVAKFYGNKKNHIITVVSEHKCVLDACRYLEQEGINITYLPVKPNGIIALETLKNAITDQTMLVSVMAVNNEIGVVQPLKEIGKICRARGVFFHSDIAQGFGKIPIDVNEFNIDLASISGHKIYGPKGIGGLYVRKKPRVRVTPLINGGGQERGMRSGTLPTPLIVGLGVAAEIAYSEMEKDTKHVNYLFDRFLNNIHSRISEVYLNGAKDPRYKGNLNLSFAGVEGESIILAIKDLAVSSGSACTSASLEPSYVLRSMGIGEELAHTSIRFGIGRFTTEQEIDYAVNLICSKIDKLRKLSPLWEMMQEGIDLKKIKWAVH</sequence>
<accession>A8GNU0</accession>
<organism>
    <name type="scientific">Rickettsia akari (strain Hartford)</name>
    <dbReference type="NCBI Taxonomy" id="293614"/>
    <lineage>
        <taxon>Bacteria</taxon>
        <taxon>Pseudomonadati</taxon>
        <taxon>Pseudomonadota</taxon>
        <taxon>Alphaproteobacteria</taxon>
        <taxon>Rickettsiales</taxon>
        <taxon>Rickettsiaceae</taxon>
        <taxon>Rickettsieae</taxon>
        <taxon>Rickettsia</taxon>
        <taxon>spotted fever group</taxon>
    </lineage>
</organism>
<proteinExistence type="inferred from homology"/>
<keyword id="KW-0001">2Fe-2S</keyword>
<keyword id="KW-0963">Cytoplasm</keyword>
<keyword id="KW-0408">Iron</keyword>
<keyword id="KW-0411">Iron-sulfur</keyword>
<keyword id="KW-0479">Metal-binding</keyword>
<keyword id="KW-0663">Pyridoxal phosphate</keyword>
<keyword id="KW-0808">Transferase</keyword>
<comment type="function">
    <text evidence="1">Master enzyme that delivers sulfur to a number of partners involved in Fe-S cluster assembly, tRNA modification or cofactor biosynthesis. Catalyzes the removal of elemental sulfur atoms from cysteine to produce alanine. Functions as a sulfur delivery protein for Fe-S cluster synthesis onto IscU, an Fe-S scaffold assembly protein, as well as other S acceptor proteins.</text>
</comment>
<comment type="catalytic activity">
    <reaction evidence="1">
        <text>(sulfur carrier)-H + L-cysteine = (sulfur carrier)-SH + L-alanine</text>
        <dbReference type="Rhea" id="RHEA:43892"/>
        <dbReference type="Rhea" id="RHEA-COMP:14737"/>
        <dbReference type="Rhea" id="RHEA-COMP:14739"/>
        <dbReference type="ChEBI" id="CHEBI:29917"/>
        <dbReference type="ChEBI" id="CHEBI:35235"/>
        <dbReference type="ChEBI" id="CHEBI:57972"/>
        <dbReference type="ChEBI" id="CHEBI:64428"/>
        <dbReference type="EC" id="2.8.1.7"/>
    </reaction>
</comment>
<comment type="cofactor">
    <cofactor evidence="1">
        <name>pyridoxal 5'-phosphate</name>
        <dbReference type="ChEBI" id="CHEBI:597326"/>
    </cofactor>
</comment>
<comment type="pathway">
    <text evidence="1">Cofactor biosynthesis; iron-sulfur cluster biosynthesis.</text>
</comment>
<comment type="subunit">
    <text evidence="1">Homodimer. Forms a heterotetramer with IscU, interacts with other sulfur acceptors.</text>
</comment>
<comment type="subcellular location">
    <subcellularLocation>
        <location evidence="1">Cytoplasm</location>
    </subcellularLocation>
</comment>
<comment type="similarity">
    <text evidence="1">Belongs to the class-V pyridoxal-phosphate-dependent aminotransferase family. NifS/IscS subfamily.</text>
</comment>
<gene>
    <name evidence="1" type="primary">iscS</name>
    <name type="ordered locus">A1C_03960</name>
</gene>
<name>ISCS_RICAH</name>
<protein>
    <recommendedName>
        <fullName evidence="1">Cysteine desulfurase IscS</fullName>
        <ecNumber evidence="1">2.8.1.7</ecNumber>
    </recommendedName>
</protein>